<keyword id="KW-0963">Cytoplasm</keyword>
<keyword id="KW-1185">Reference proteome</keyword>
<feature type="chain" id="PRO_0000232434" description="Protein NDRG4">
    <location>
        <begin position="1"/>
        <end position="405"/>
    </location>
</feature>
<feature type="region of interest" description="Disordered" evidence="3">
    <location>
        <begin position="352"/>
        <end position="405"/>
    </location>
</feature>
<feature type="compositionally biased region" description="Low complexity" evidence="3">
    <location>
        <begin position="361"/>
        <end position="376"/>
    </location>
</feature>
<feature type="compositionally biased region" description="Polar residues" evidence="3">
    <location>
        <begin position="385"/>
        <end position="405"/>
    </location>
</feature>
<comment type="function">
    <text evidence="1">Contributes to the maintenance of intracerebral BDNF levels within the normal range. May enhance growth factor-induced ERK1 and ERK2 phosphorylation. May attenuate growth factor-promoted ELK1 phosphorylation in a microtubule-dependent manner (By similarity).</text>
</comment>
<comment type="subcellular location">
    <subcellularLocation>
        <location evidence="1">Cytoplasm</location>
        <location evidence="1">Cytosol</location>
    </subcellularLocation>
</comment>
<comment type="similarity">
    <text evidence="2">Belongs to the NDRG family.</text>
</comment>
<evidence type="ECO:0000250" key="1"/>
<evidence type="ECO:0000255" key="2"/>
<evidence type="ECO:0000256" key="3">
    <source>
        <dbReference type="SAM" id="MobiDB-lite"/>
    </source>
</evidence>
<evidence type="ECO:0000312" key="4">
    <source>
        <dbReference type="EMBL" id="AAH75414.1"/>
    </source>
</evidence>
<sequence>MKLLGHKIELWAGLLLPDVSISGMSELRFPEEKPLLRGQDTEMESADTFLSAADTDWKEHDIETPYGMLHVVIRGTPKGNRPAILTYHDVGLNHKLCFNTFFNYEDMQEITKHFVVCHVDAPGQQVGASQFPQGYQYPTMEQLAAMLPSVMQHFGFQSIIGIGVGAGAYVLAKFALIFPELVEGMVLVNIDPNGKGWIDWAASKLSGLTSSLPETVLSHLFSQEELMNNTELVQNYRQQISSCVNQSNLQLFWNMYNSRRDLEMSRPGTVPNAKTLRAPVMLVVGDNAPAEDCVVECNSKLDPTNTTFLKMADSGGLPQVTQPGKLTEAFKYFLQGMGYIASLKDRRQSASAGAVPSASMTRLARSRTASLTSASSVDGARPRPCTQSESSDGIGQINHTMEVSC</sequence>
<proteinExistence type="evidence at transcript level"/>
<accession>Q6DIX1</accession>
<gene>
    <name evidence="4" type="primary">ndrg4</name>
</gene>
<protein>
    <recommendedName>
        <fullName>Protein NDRG4</fullName>
    </recommendedName>
</protein>
<name>NDRG4_XENTR</name>
<organism>
    <name type="scientific">Xenopus tropicalis</name>
    <name type="common">Western clawed frog</name>
    <name type="synonym">Silurana tropicalis</name>
    <dbReference type="NCBI Taxonomy" id="8364"/>
    <lineage>
        <taxon>Eukaryota</taxon>
        <taxon>Metazoa</taxon>
        <taxon>Chordata</taxon>
        <taxon>Craniata</taxon>
        <taxon>Vertebrata</taxon>
        <taxon>Euteleostomi</taxon>
        <taxon>Amphibia</taxon>
        <taxon>Batrachia</taxon>
        <taxon>Anura</taxon>
        <taxon>Pipoidea</taxon>
        <taxon>Pipidae</taxon>
        <taxon>Xenopodinae</taxon>
        <taxon>Xenopus</taxon>
        <taxon>Silurana</taxon>
    </lineage>
</organism>
<dbReference type="EMBL" id="BC075414">
    <property type="protein sequence ID" value="AAH75414.1"/>
    <property type="molecule type" value="mRNA"/>
</dbReference>
<dbReference type="RefSeq" id="NP_001006704.1">
    <property type="nucleotide sequence ID" value="NM_001006703.1"/>
</dbReference>
<dbReference type="SMR" id="Q6DIX1"/>
<dbReference type="FunCoup" id="Q6DIX1">
    <property type="interactions" value="1164"/>
</dbReference>
<dbReference type="STRING" id="8364.ENSXETP00000021460"/>
<dbReference type="ESTHER" id="xentr-ndrg4">
    <property type="family name" value="Ndr_family"/>
</dbReference>
<dbReference type="MEROPS" id="S33.986"/>
<dbReference type="PaxDb" id="8364-ENSXETP00000030072"/>
<dbReference type="DNASU" id="448335"/>
<dbReference type="GeneID" id="448335"/>
<dbReference type="KEGG" id="xtr:448335"/>
<dbReference type="AGR" id="Xenbase:XB-GENE-941128"/>
<dbReference type="CTD" id="65009"/>
<dbReference type="Xenbase" id="XB-GENE-941128">
    <property type="gene designation" value="ndrg4"/>
</dbReference>
<dbReference type="eggNOG" id="KOG2931">
    <property type="taxonomic scope" value="Eukaryota"/>
</dbReference>
<dbReference type="HOGENOM" id="CLU_035361_1_0_1"/>
<dbReference type="InParanoid" id="Q6DIX1"/>
<dbReference type="OrthoDB" id="191979at2759"/>
<dbReference type="TreeFam" id="TF313168"/>
<dbReference type="Proteomes" id="UP000008143">
    <property type="component" value="Chromosome 4"/>
</dbReference>
<dbReference type="Bgee" id="ENSXETG00000013742">
    <property type="expression patterns" value="Expressed in brain and 16 other cell types or tissues"/>
</dbReference>
<dbReference type="ExpressionAtlas" id="Q6DIX1">
    <property type="expression patterns" value="differential"/>
</dbReference>
<dbReference type="GO" id="GO:0005829">
    <property type="term" value="C:cytosol"/>
    <property type="evidence" value="ECO:0007669"/>
    <property type="project" value="UniProtKB-SubCell"/>
</dbReference>
<dbReference type="FunFam" id="3.40.50.1820:FF:000009">
    <property type="entry name" value="NDRG family member 4"/>
    <property type="match status" value="1"/>
</dbReference>
<dbReference type="Gene3D" id="3.40.50.1820">
    <property type="entry name" value="alpha/beta hydrolase"/>
    <property type="match status" value="1"/>
</dbReference>
<dbReference type="InterPro" id="IPR029058">
    <property type="entry name" value="AB_hydrolase_fold"/>
</dbReference>
<dbReference type="InterPro" id="IPR004142">
    <property type="entry name" value="NDRG"/>
</dbReference>
<dbReference type="PANTHER" id="PTHR11034">
    <property type="entry name" value="N-MYC DOWNSTREAM REGULATED"/>
    <property type="match status" value="1"/>
</dbReference>
<dbReference type="Pfam" id="PF03096">
    <property type="entry name" value="Ndr"/>
    <property type="match status" value="1"/>
</dbReference>
<dbReference type="SUPFAM" id="SSF53474">
    <property type="entry name" value="alpha/beta-Hydrolases"/>
    <property type="match status" value="1"/>
</dbReference>
<reference evidence="4" key="1">
    <citation type="submission" date="2004-06" db="EMBL/GenBank/DDBJ databases">
        <authorList>
            <consortium name="NIH - Xenopus Gene Collection (XGC) project"/>
        </authorList>
    </citation>
    <scope>NUCLEOTIDE SEQUENCE [LARGE SCALE MRNA]</scope>
</reference>